<keyword id="KW-0963">Cytoplasm</keyword>
<keyword id="KW-0223">Dioxygenase</keyword>
<keyword id="KW-0227">DNA damage</keyword>
<keyword id="KW-0234">DNA repair</keyword>
<keyword id="KW-0379">Hydroxylation</keyword>
<keyword id="KW-0408">Iron</keyword>
<keyword id="KW-0479">Metal-binding</keyword>
<keyword id="KW-0539">Nucleus</keyword>
<keyword id="KW-0558">Oxidation</keyword>
<keyword id="KW-0560">Oxidoreductase</keyword>
<keyword id="KW-1185">Reference proteome</keyword>
<keyword id="KW-0832">Ubl conjugation</keyword>
<gene>
    <name evidence="11" type="primary">Alkbh3</name>
    <name evidence="8" type="synonym">Abh3</name>
</gene>
<proteinExistence type="evidence at protein level"/>
<accession>Q8K1E6</accession>
<reference key="1">
    <citation type="journal article" date="2004" name="Genome Res.">
        <title>The status, quality, and expansion of the NIH full-length cDNA project: the Mammalian Gene Collection (MGC).</title>
        <authorList>
            <consortium name="The MGC Project Team"/>
        </authorList>
    </citation>
    <scope>NUCLEOTIDE SEQUENCE [LARGE SCALE MRNA]</scope>
    <source>
        <tissue>Mammary tumor</tissue>
    </source>
</reference>
<reference key="2">
    <citation type="journal article" date="2005" name="J. Biol. Chem.">
        <title>Repair of methylation damage in DNA and RNA by mammalian AlkB homologues.</title>
        <authorList>
            <person name="Lee D.-H."/>
            <person name="Jin S.-G."/>
            <person name="Cai S."/>
            <person name="Chen Y."/>
            <person name="Pfeifer G.P."/>
            <person name="O'Connor T.R."/>
        </authorList>
    </citation>
    <scope>FUNCTION</scope>
    <scope>CATALYTIC ACTIVITY</scope>
    <scope>MUTAGENESIS OF ASP-193 AND HIS-257</scope>
    <scope>TISSUE SPECIFICITY</scope>
</reference>
<reference key="3">
    <citation type="journal article" date="2006" name="EMBO J.">
        <title>Repair deficient mice reveal mABH2 as the primary oxidative demethylase for repairing 1meA and 3meC lesions in DNA.</title>
        <authorList>
            <person name="Ringvoll J."/>
            <person name="Nordstrand L.M."/>
            <person name="Vaagboe C.B."/>
            <person name="Talstad V."/>
            <person name="Reite K."/>
            <person name="Aas P.A."/>
            <person name="Lauritzen K.H."/>
            <person name="Liabakk N.B."/>
            <person name="Bjoerk A."/>
            <person name="Doughty R.W."/>
            <person name="Falnes P.O."/>
            <person name="Krokan H.E."/>
            <person name="Klungland A."/>
        </authorList>
    </citation>
    <scope>DISRUPTION PHENOTYPE</scope>
</reference>
<reference key="4">
    <citation type="journal article" date="2008" name="Cancer Res.">
        <title>AlkB homologue 2-mediated repair of ethenoadenine lesions in mammalian DNA.</title>
        <authorList>
            <person name="Ringvoll J."/>
            <person name="Moen M.N."/>
            <person name="Nordstrand L.M."/>
            <person name="Meira L.B."/>
            <person name="Pang B."/>
            <person name="Bekkelund A."/>
            <person name="Dedon P.C."/>
            <person name="Bjelland S."/>
            <person name="Samson L.D."/>
            <person name="Falnes P.O."/>
            <person name="Klungland A."/>
        </authorList>
    </citation>
    <scope>DISRUPTION PHENOTYPE</scope>
</reference>
<reference key="5">
    <citation type="journal article" date="2010" name="Cell">
        <title>A tissue-specific atlas of mouse protein phosphorylation and expression.</title>
        <authorList>
            <person name="Huttlin E.L."/>
            <person name="Jedrychowski M.P."/>
            <person name="Elias J.E."/>
            <person name="Goswami T."/>
            <person name="Rad R."/>
            <person name="Beausoleil S.A."/>
            <person name="Villen J."/>
            <person name="Haas W."/>
            <person name="Sowa M.E."/>
            <person name="Gygi S.P."/>
        </authorList>
    </citation>
    <scope>IDENTIFICATION BY MASS SPECTROMETRY [LARGE SCALE ANALYSIS]</scope>
    <source>
        <tissue>Heart</tissue>
        <tissue>Lung</tissue>
        <tissue>Testis</tissue>
    </source>
</reference>
<evidence type="ECO:0000250" key="1">
    <source>
        <dbReference type="UniProtKB" id="Q6NS38"/>
    </source>
</evidence>
<evidence type="ECO:0000250" key="2">
    <source>
        <dbReference type="UniProtKB" id="Q96Q83"/>
    </source>
</evidence>
<evidence type="ECO:0000255" key="3">
    <source>
        <dbReference type="PROSITE-ProRule" id="PRU00805"/>
    </source>
</evidence>
<evidence type="ECO:0000256" key="4">
    <source>
        <dbReference type="SAM" id="MobiDB-lite"/>
    </source>
</evidence>
<evidence type="ECO:0000269" key="5">
    <source>
    </source>
</evidence>
<evidence type="ECO:0000269" key="6">
    <source>
    </source>
</evidence>
<evidence type="ECO:0000269" key="7">
    <source>
    </source>
</evidence>
<evidence type="ECO:0000303" key="8">
    <source>
    </source>
</evidence>
<evidence type="ECO:0000305" key="9"/>
<evidence type="ECO:0000305" key="10">
    <source>
    </source>
</evidence>
<evidence type="ECO:0000312" key="11">
    <source>
        <dbReference type="MGI" id="MGI:1916363"/>
    </source>
</evidence>
<name>ALKB3_MOUSE</name>
<sequence>MEDKRQRARVQGGWATPTKSQSATQPASPARSRLSQTAGPAWRSKEQQQCDRQFVFKEPQLVVRAAPEPRVIDREGVYEISLSPTGVSRVCLYPGFVDLKEADWILEQLCKDVPWKQRMGIREDVTYPQPRLTAWYGELPYTYSRITMEPNPHWLPVLWTLKSRIEENTSHTFNSLLCNFYRDEKDSVDWHSDDEPSLGSCPVIASLSFGATRTFEMRKKPPPEENGDYTYVERVKIPLDHGTLLIMEGATQADWQHRVPKEYHSRQPRVNLTFRTVYPDPRGAPR</sequence>
<feature type="chain" id="PRO_0000239279" description="Alpha-ketoglutarate-dependent dioxygenase alkB homolog 3">
    <location>
        <begin position="1"/>
        <end position="286"/>
    </location>
</feature>
<feature type="domain" description="Fe2OG dioxygenase" evidence="3">
    <location>
        <begin position="172"/>
        <end position="278"/>
    </location>
</feature>
<feature type="region of interest" description="Disordered" evidence="4">
    <location>
        <begin position="1"/>
        <end position="46"/>
    </location>
</feature>
<feature type="compositionally biased region" description="Polar residues" evidence="4">
    <location>
        <begin position="17"/>
        <end position="38"/>
    </location>
</feature>
<feature type="binding site" evidence="1">
    <location>
        <position position="115"/>
    </location>
    <ligand>
        <name>substrate</name>
    </ligand>
</feature>
<feature type="binding site" evidence="1">
    <location>
        <begin position="141"/>
        <end position="143"/>
    </location>
    <ligand>
        <name>substrate</name>
    </ligand>
</feature>
<feature type="binding site" evidence="2">
    <location>
        <begin position="179"/>
        <end position="181"/>
    </location>
    <ligand>
        <name>2-oxoglutarate</name>
        <dbReference type="ChEBI" id="CHEBI:16810"/>
    </ligand>
</feature>
<feature type="binding site" evidence="3">
    <location>
        <position position="191"/>
    </location>
    <ligand>
        <name>Fe cation</name>
        <dbReference type="ChEBI" id="CHEBI:24875"/>
        <note>catalytic</note>
    </ligand>
</feature>
<feature type="binding site" evidence="3">
    <location>
        <position position="193"/>
    </location>
    <ligand>
        <name>Fe cation</name>
        <dbReference type="ChEBI" id="CHEBI:24875"/>
        <note>catalytic</note>
    </ligand>
</feature>
<feature type="binding site" evidence="1">
    <location>
        <position position="194"/>
    </location>
    <ligand>
        <name>substrate</name>
    </ligand>
</feature>
<feature type="binding site" evidence="3">
    <location>
        <position position="257"/>
    </location>
    <ligand>
        <name>Fe cation</name>
        <dbReference type="ChEBI" id="CHEBI:24875"/>
        <note>catalytic</note>
    </ligand>
</feature>
<feature type="binding site" evidence="2">
    <location>
        <begin position="269"/>
        <end position="275"/>
    </location>
    <ligand>
        <name>2-oxoglutarate</name>
        <dbReference type="ChEBI" id="CHEBI:16810"/>
    </ligand>
</feature>
<feature type="binding site" evidence="2">
    <location>
        <position position="275"/>
    </location>
    <ligand>
        <name>2-oxoglutarate</name>
        <dbReference type="ChEBI" id="CHEBI:16810"/>
    </ligand>
</feature>
<feature type="modified residue" description="(4R)-5-hydroxyleucine; alternate" evidence="2">
    <location>
        <position position="177"/>
    </location>
</feature>
<feature type="modified residue" description="(4R)-5-oxoleucine; alternate" evidence="2">
    <location>
        <position position="177"/>
    </location>
</feature>
<feature type="mutagenesis site" description="Loss of activity." evidence="5">
    <original>D</original>
    <variation>A</variation>
    <location>
        <position position="193"/>
    </location>
</feature>
<feature type="mutagenesis site" description="Reduced activity." evidence="5">
    <original>H</original>
    <variation>A</variation>
    <location>
        <position position="257"/>
    </location>
</feature>
<dbReference type="EC" id="1.14.11.33" evidence="5"/>
<dbReference type="EC" id="1.14.11.54" evidence="2"/>
<dbReference type="EMBL" id="BC018196">
    <property type="protein sequence ID" value="AAH18196.1"/>
    <property type="molecule type" value="mRNA"/>
</dbReference>
<dbReference type="CCDS" id="CCDS38184.1"/>
<dbReference type="RefSeq" id="NP_001405608.1">
    <property type="nucleotide sequence ID" value="NM_001418679.1"/>
</dbReference>
<dbReference type="RefSeq" id="NP_001405609.1">
    <property type="nucleotide sequence ID" value="NM_001418680.1"/>
</dbReference>
<dbReference type="RefSeq" id="NP_001405611.1">
    <property type="nucleotide sequence ID" value="NM_001418682.1"/>
</dbReference>
<dbReference type="RefSeq" id="NP_001405613.1">
    <property type="nucleotide sequence ID" value="NM_001418684.1"/>
</dbReference>
<dbReference type="RefSeq" id="NP_001405614.1">
    <property type="nucleotide sequence ID" value="NM_001418685.1"/>
</dbReference>
<dbReference type="RefSeq" id="NP_081220.1">
    <property type="nucleotide sequence ID" value="NM_026944.2"/>
</dbReference>
<dbReference type="RefSeq" id="XP_006500186.1">
    <property type="nucleotide sequence ID" value="XM_006500123.3"/>
</dbReference>
<dbReference type="SMR" id="Q8K1E6"/>
<dbReference type="BioGRID" id="213237">
    <property type="interactions" value="5"/>
</dbReference>
<dbReference type="FunCoup" id="Q8K1E6">
    <property type="interactions" value="2074"/>
</dbReference>
<dbReference type="STRING" id="10090.ENSMUSP00000038721"/>
<dbReference type="iPTMnet" id="Q8K1E6"/>
<dbReference type="PhosphoSitePlus" id="Q8K1E6"/>
<dbReference type="jPOST" id="Q8K1E6"/>
<dbReference type="PaxDb" id="10090-ENSMUSP00000106871"/>
<dbReference type="PeptideAtlas" id="Q8K1E6"/>
<dbReference type="ProteomicsDB" id="296021"/>
<dbReference type="Pumba" id="Q8K1E6"/>
<dbReference type="Antibodypedia" id="1876">
    <property type="antibodies" value="259 antibodies from 32 providers"/>
</dbReference>
<dbReference type="Ensembl" id="ENSMUST00000040005.13">
    <property type="protein sequence ID" value="ENSMUSP00000038721.7"/>
    <property type="gene ID" value="ENSMUSG00000040174.15"/>
</dbReference>
<dbReference type="GeneID" id="69113"/>
<dbReference type="KEGG" id="mmu:69113"/>
<dbReference type="UCSC" id="uc008lgn.1">
    <property type="organism name" value="mouse"/>
</dbReference>
<dbReference type="AGR" id="MGI:1916363"/>
<dbReference type="CTD" id="221120"/>
<dbReference type="MGI" id="MGI:1916363">
    <property type="gene designation" value="Alkbh3"/>
</dbReference>
<dbReference type="VEuPathDB" id="HostDB:ENSMUSG00000040174"/>
<dbReference type="eggNOG" id="ENOG502QW9E">
    <property type="taxonomic scope" value="Eukaryota"/>
</dbReference>
<dbReference type="GeneTree" id="ENSGT00940000157226"/>
<dbReference type="HOGENOM" id="CLU_048788_2_1_1"/>
<dbReference type="InParanoid" id="Q8K1E6"/>
<dbReference type="OMA" id="FEFHQPT"/>
<dbReference type="OrthoDB" id="38519at9989"/>
<dbReference type="BRENDA" id="1.14.11.54">
    <property type="organism ID" value="3474"/>
</dbReference>
<dbReference type="BioGRID-ORCS" id="69113">
    <property type="hits" value="2 hits in 115 CRISPR screens"/>
</dbReference>
<dbReference type="ChiTaRS" id="Alkbh3">
    <property type="organism name" value="mouse"/>
</dbReference>
<dbReference type="PRO" id="PR:Q8K1E6"/>
<dbReference type="Proteomes" id="UP000000589">
    <property type="component" value="Chromosome 2"/>
</dbReference>
<dbReference type="RNAct" id="Q8K1E6">
    <property type="molecule type" value="protein"/>
</dbReference>
<dbReference type="Bgee" id="ENSMUSG00000040174">
    <property type="expression patterns" value="Expressed in interventricular septum and 226 other cell types or tissues"/>
</dbReference>
<dbReference type="ExpressionAtlas" id="Q8K1E6">
    <property type="expression patterns" value="baseline and differential"/>
</dbReference>
<dbReference type="GO" id="GO:0005737">
    <property type="term" value="C:cytoplasm"/>
    <property type="evidence" value="ECO:0007669"/>
    <property type="project" value="UniProtKB-SubCell"/>
</dbReference>
<dbReference type="GO" id="GO:0005634">
    <property type="term" value="C:nucleus"/>
    <property type="evidence" value="ECO:0007669"/>
    <property type="project" value="UniProtKB-SubCell"/>
</dbReference>
<dbReference type="GO" id="GO:0016706">
    <property type="term" value="F:2-oxoglutarate-dependent dioxygenase activity"/>
    <property type="evidence" value="ECO:0000314"/>
    <property type="project" value="MGI"/>
</dbReference>
<dbReference type="GO" id="GO:0035516">
    <property type="term" value="F:broad specificity oxidative DNA demethylase activity"/>
    <property type="evidence" value="ECO:0000314"/>
    <property type="project" value="UniProtKB"/>
</dbReference>
<dbReference type="GO" id="GO:0051747">
    <property type="term" value="F:cytosine C-5 DNA demethylase activity"/>
    <property type="evidence" value="ECO:0000314"/>
    <property type="project" value="MGI"/>
</dbReference>
<dbReference type="GO" id="GO:0008198">
    <property type="term" value="F:ferrous iron binding"/>
    <property type="evidence" value="ECO:0000250"/>
    <property type="project" value="UniProtKB"/>
</dbReference>
<dbReference type="GO" id="GO:1990930">
    <property type="term" value="F:mRNA N1-methyladenosine dioxygenase activity"/>
    <property type="evidence" value="ECO:0000250"/>
    <property type="project" value="UniProtKB"/>
</dbReference>
<dbReference type="GO" id="GO:0035515">
    <property type="term" value="F:oxidative RNA demethylase activity"/>
    <property type="evidence" value="ECO:0000314"/>
    <property type="project" value="UniProtKB"/>
</dbReference>
<dbReference type="GO" id="GO:0008283">
    <property type="term" value="P:cell population proliferation"/>
    <property type="evidence" value="ECO:0000250"/>
    <property type="project" value="UniProtKB"/>
</dbReference>
<dbReference type="GO" id="GO:0006307">
    <property type="term" value="P:DNA alkylation repair"/>
    <property type="evidence" value="ECO:0007669"/>
    <property type="project" value="InterPro"/>
</dbReference>
<dbReference type="FunFam" id="2.60.120.590:FF:000003">
    <property type="entry name" value="alpha-ketoglutarate-dependent dioxygenase alkB homolog 3"/>
    <property type="match status" value="1"/>
</dbReference>
<dbReference type="Gene3D" id="2.60.120.590">
    <property type="entry name" value="Alpha-ketoglutarate-dependent dioxygenase AlkB-like"/>
    <property type="match status" value="1"/>
</dbReference>
<dbReference type="InterPro" id="IPR027450">
    <property type="entry name" value="AlkB-like"/>
</dbReference>
<dbReference type="InterPro" id="IPR037151">
    <property type="entry name" value="AlkB-like_sf"/>
</dbReference>
<dbReference type="InterPro" id="IPR032854">
    <property type="entry name" value="ALKBH3"/>
</dbReference>
<dbReference type="InterPro" id="IPR005123">
    <property type="entry name" value="Oxoglu/Fe-dep_dioxygenase_dom"/>
</dbReference>
<dbReference type="PANTHER" id="PTHR31212">
    <property type="entry name" value="ALPHA-KETOGLUTARATE-DEPENDENT DIOXYGENASE ALKB HOMOLOG 3"/>
    <property type="match status" value="1"/>
</dbReference>
<dbReference type="PANTHER" id="PTHR31212:SF4">
    <property type="entry name" value="ALPHA-KETOGLUTARATE-DEPENDENT DIOXYGENASE ALKB HOMOLOG 3"/>
    <property type="match status" value="1"/>
</dbReference>
<dbReference type="Pfam" id="PF13532">
    <property type="entry name" value="2OG-FeII_Oxy_2"/>
    <property type="match status" value="1"/>
</dbReference>
<dbReference type="SUPFAM" id="SSF51197">
    <property type="entry name" value="Clavaminate synthase-like"/>
    <property type="match status" value="1"/>
</dbReference>
<dbReference type="PROSITE" id="PS51471">
    <property type="entry name" value="FE2OG_OXY"/>
    <property type="match status" value="1"/>
</dbReference>
<comment type="function">
    <text evidence="2 5">Dioxygenase that mediates demethylation of DNA and RNA containing 1-methyladenosine (m1A) (By similarity). Repairs alkylated DNA containing 1-methyladenosine (m1A) and 3-methylcytosine (m3C) by oxidative demethylation (PubMed:16174769). Has a strong preference for single-stranded DNA (PubMed:16174769). Able to process alkylated m3C within double-stranded regions via its interaction with ASCC3, which promotes DNA unwinding to generate single-stranded substrate needed for ALKBH3. Can repair exocyclic 3,N4-ethenocytosine adducs in single-stranded DNA. Also acts on RNA. Demethylates N(1)-methyladenosine (m1A) RNA, an epigenetic internal modification of messenger RNAs (mRNAs) highly enriched within 5'-untranslated regions (UTRs) and in the vicinity of start codons. Requires molecular oxygen, alpha-ketoglutarate and iron (By similarity).</text>
</comment>
<comment type="catalytic activity">
    <reaction evidence="2">
        <text>an N(1)-methyladenosine in mRNA + 2-oxoglutarate + O2 = an adenosine in mRNA + formaldehyde + succinate + CO2</text>
        <dbReference type="Rhea" id="RHEA:49516"/>
        <dbReference type="Rhea" id="RHEA-COMP:12414"/>
        <dbReference type="Rhea" id="RHEA-COMP:12415"/>
        <dbReference type="ChEBI" id="CHEBI:15379"/>
        <dbReference type="ChEBI" id="CHEBI:16526"/>
        <dbReference type="ChEBI" id="CHEBI:16810"/>
        <dbReference type="ChEBI" id="CHEBI:16842"/>
        <dbReference type="ChEBI" id="CHEBI:30031"/>
        <dbReference type="ChEBI" id="CHEBI:74411"/>
        <dbReference type="ChEBI" id="CHEBI:74491"/>
        <dbReference type="EC" id="1.14.11.54"/>
    </reaction>
</comment>
<comment type="catalytic activity">
    <reaction evidence="5">
        <text>a methylated nucleobase within DNA + 2-oxoglutarate + O2 = a nucleobase within DNA + formaldehyde + succinate + CO2</text>
        <dbReference type="Rhea" id="RHEA:30299"/>
        <dbReference type="Rhea" id="RHEA-COMP:12192"/>
        <dbReference type="Rhea" id="RHEA-COMP:12193"/>
        <dbReference type="ChEBI" id="CHEBI:15379"/>
        <dbReference type="ChEBI" id="CHEBI:16526"/>
        <dbReference type="ChEBI" id="CHEBI:16810"/>
        <dbReference type="ChEBI" id="CHEBI:16842"/>
        <dbReference type="ChEBI" id="CHEBI:30031"/>
        <dbReference type="ChEBI" id="CHEBI:32875"/>
        <dbReference type="ChEBI" id="CHEBI:64428"/>
        <dbReference type="EC" id="1.14.11.33"/>
    </reaction>
    <physiologicalReaction direction="left-to-right" evidence="10">
        <dbReference type="Rhea" id="RHEA:30300"/>
    </physiologicalReaction>
</comment>
<comment type="catalytic activity">
    <reaction evidence="5">
        <text>an N(1)-methyl-2'-deoxyadenosine in single-stranded DNA + 2-oxoglutarate + O2 = a 2'-deoxyadenosine in single-stranded DNA + formaldehyde + succinate + CO2 + H(+)</text>
        <dbReference type="Rhea" id="RHEA:70447"/>
        <dbReference type="Rhea" id="RHEA-COMP:17895"/>
        <dbReference type="Rhea" id="RHEA-COMP:17896"/>
        <dbReference type="ChEBI" id="CHEBI:15378"/>
        <dbReference type="ChEBI" id="CHEBI:15379"/>
        <dbReference type="ChEBI" id="CHEBI:16526"/>
        <dbReference type="ChEBI" id="CHEBI:16810"/>
        <dbReference type="ChEBI" id="CHEBI:16842"/>
        <dbReference type="ChEBI" id="CHEBI:30031"/>
        <dbReference type="ChEBI" id="CHEBI:90615"/>
        <dbReference type="ChEBI" id="CHEBI:139096"/>
    </reaction>
    <physiologicalReaction direction="left-to-right" evidence="10">
        <dbReference type="Rhea" id="RHEA:70448"/>
    </physiologicalReaction>
</comment>
<comment type="catalytic activity">
    <reaction evidence="5">
        <text>an N(3)-methyl-2'-deoxycytidine in single-stranded DNA + 2-oxoglutarate + O2 = a 2'-deoxycytidine in single-stranded DNA + formaldehyde + succinate + CO2 + H(+)</text>
        <dbReference type="Rhea" id="RHEA:70435"/>
        <dbReference type="Rhea" id="RHEA-COMP:12846"/>
        <dbReference type="Rhea" id="RHEA-COMP:17894"/>
        <dbReference type="ChEBI" id="CHEBI:15378"/>
        <dbReference type="ChEBI" id="CHEBI:15379"/>
        <dbReference type="ChEBI" id="CHEBI:16526"/>
        <dbReference type="ChEBI" id="CHEBI:16810"/>
        <dbReference type="ChEBI" id="CHEBI:16842"/>
        <dbReference type="ChEBI" id="CHEBI:30031"/>
        <dbReference type="ChEBI" id="CHEBI:85452"/>
        <dbReference type="ChEBI" id="CHEBI:139075"/>
    </reaction>
    <physiologicalReaction direction="left-to-right" evidence="10">
        <dbReference type="Rhea" id="RHEA:70436"/>
    </physiologicalReaction>
</comment>
<comment type="catalytic activity">
    <reaction evidence="2">
        <text>a 3,N(4)-etheno-2'-deoxycytidine in single-stranded DNA + 2-oxoglutarate + O2 + H2O = a 2'-deoxycytidine in single-stranded DNA + glyoxal + succinate + CO2</text>
        <dbReference type="Rhea" id="RHEA:70471"/>
        <dbReference type="Rhea" id="RHEA-COMP:12846"/>
        <dbReference type="Rhea" id="RHEA-COMP:17906"/>
        <dbReference type="ChEBI" id="CHEBI:15377"/>
        <dbReference type="ChEBI" id="CHEBI:15379"/>
        <dbReference type="ChEBI" id="CHEBI:16526"/>
        <dbReference type="ChEBI" id="CHEBI:16810"/>
        <dbReference type="ChEBI" id="CHEBI:30031"/>
        <dbReference type="ChEBI" id="CHEBI:34779"/>
        <dbReference type="ChEBI" id="CHEBI:85452"/>
        <dbReference type="ChEBI" id="CHEBI:189585"/>
    </reaction>
    <physiologicalReaction direction="left-to-right" evidence="2">
        <dbReference type="Rhea" id="RHEA:70472"/>
    </physiologicalReaction>
</comment>
<comment type="cofactor">
    <cofactor evidence="2">
        <name>Fe(2+)</name>
        <dbReference type="ChEBI" id="CHEBI:29033"/>
    </cofactor>
    <text evidence="2">Binds 1 Fe(2+) ion per subunit.</text>
</comment>
<comment type="activity regulation">
    <text evidence="2">Activated by ascorbate.</text>
</comment>
<comment type="subunit">
    <text evidence="2">Interacts with the ASCC complex composed of ASCC1, ASCC2 and ASCC3. Interacts directly with ASCC3, and is thereby recruited to the ASCC complex. Interacts with OTUD4; the interaction is direct. Interacts with USP7 and USP9X.</text>
</comment>
<comment type="subcellular location">
    <subcellularLocation>
        <location evidence="2">Nucleus</location>
    </subcellularLocation>
    <subcellularLocation>
        <location evidence="2">Cytoplasm</location>
    </subcellularLocation>
    <text evidence="2">Colocalizes with ASCC2 and ASCC3 in nuclear foci when cells have been exposed to alkylating agents that cause DNA damage. Predominantly localizes to the nucleus.</text>
</comment>
<comment type="tissue specificity">
    <text evidence="5">Detected in testis, kidney, liver and heart.</text>
</comment>
<comment type="PTM">
    <text evidence="2">Ubiquitinated; undergoes 'Lys-48'-linked polyubiquitination. OTUD4 promotes USP7 and USP9X-dependent deubiquitination of 'Lys-48'-polyubiquitinated ALKBH3 promoting the repair of alkylated DNA lesions.</text>
</comment>
<comment type="disruption phenotype">
    <text evidence="6 7">No visible phenotype.</text>
</comment>
<comment type="similarity">
    <text evidence="9">Belongs to the alkB family.</text>
</comment>
<protein>
    <recommendedName>
        <fullName evidence="9">Alpha-ketoglutarate-dependent dioxygenase alkB homolog 3</fullName>
        <ecNumber evidence="5">1.14.11.33</ecNumber>
        <ecNumber evidence="2">1.14.11.54</ecNumber>
    </recommendedName>
    <alternativeName>
        <fullName evidence="8">Alkylated DNA repair protein alkB homolog 3</fullName>
        <shortName evidence="8">mAbh3</shortName>
    </alternativeName>
</protein>
<organism>
    <name type="scientific">Mus musculus</name>
    <name type="common">Mouse</name>
    <dbReference type="NCBI Taxonomy" id="10090"/>
    <lineage>
        <taxon>Eukaryota</taxon>
        <taxon>Metazoa</taxon>
        <taxon>Chordata</taxon>
        <taxon>Craniata</taxon>
        <taxon>Vertebrata</taxon>
        <taxon>Euteleostomi</taxon>
        <taxon>Mammalia</taxon>
        <taxon>Eutheria</taxon>
        <taxon>Euarchontoglires</taxon>
        <taxon>Glires</taxon>
        <taxon>Rodentia</taxon>
        <taxon>Myomorpha</taxon>
        <taxon>Muroidea</taxon>
        <taxon>Muridae</taxon>
        <taxon>Murinae</taxon>
        <taxon>Mus</taxon>
        <taxon>Mus</taxon>
    </lineage>
</organism>